<accession>Q15021</accession>
<accession>D3DUR4</accession>
<accession>Q8N6U3</accession>
<dbReference type="EMBL" id="D63880">
    <property type="protein sequence ID" value="BAA09930.2"/>
    <property type="status" value="ALT_INIT"/>
    <property type="molecule type" value="mRNA"/>
</dbReference>
<dbReference type="EMBL" id="AC006064">
    <property type="status" value="NOT_ANNOTATED_CDS"/>
    <property type="molecule type" value="Genomic_DNA"/>
</dbReference>
<dbReference type="EMBL" id="CH471116">
    <property type="protein sequence ID" value="EAW88788.1"/>
    <property type="molecule type" value="Genomic_DNA"/>
</dbReference>
<dbReference type="EMBL" id="CH471116">
    <property type="protein sequence ID" value="EAW88789.1"/>
    <property type="molecule type" value="Genomic_DNA"/>
</dbReference>
<dbReference type="EMBL" id="BC028182">
    <property type="protein sequence ID" value="AAH28182.1"/>
    <property type="molecule type" value="mRNA"/>
</dbReference>
<dbReference type="CCDS" id="CCDS8548.1"/>
<dbReference type="RefSeq" id="NP_055680.3">
    <property type="nucleotide sequence ID" value="NM_014865.3"/>
</dbReference>
<dbReference type="EMDB" id="EMD-10827"/>
<dbReference type="SMR" id="Q15021"/>
<dbReference type="BioGRID" id="115246">
    <property type="interactions" value="262"/>
</dbReference>
<dbReference type="ComplexPortal" id="CPX-979">
    <property type="entry name" value="Condensin I complex"/>
</dbReference>
<dbReference type="CORUM" id="Q15021"/>
<dbReference type="FunCoup" id="Q15021">
    <property type="interactions" value="2508"/>
</dbReference>
<dbReference type="IntAct" id="Q15021">
    <property type="interactions" value="90"/>
</dbReference>
<dbReference type="MINT" id="Q15021"/>
<dbReference type="STRING" id="9606.ENSP00000325017"/>
<dbReference type="GlyGen" id="Q15021">
    <property type="glycosylation" value="3 sites, 1 O-linked glycan (3 sites)"/>
</dbReference>
<dbReference type="iPTMnet" id="Q15021"/>
<dbReference type="MetOSite" id="Q15021"/>
<dbReference type="PhosphoSitePlus" id="Q15021"/>
<dbReference type="SwissPalm" id="Q15021"/>
<dbReference type="BioMuta" id="NCAPD2"/>
<dbReference type="DMDM" id="259016362"/>
<dbReference type="jPOST" id="Q15021"/>
<dbReference type="MassIVE" id="Q15021"/>
<dbReference type="PaxDb" id="9606-ENSP00000325017"/>
<dbReference type="PeptideAtlas" id="Q15021"/>
<dbReference type="ProteomicsDB" id="60373"/>
<dbReference type="Pumba" id="Q15021"/>
<dbReference type="Antibodypedia" id="22418">
    <property type="antibodies" value="146 antibodies from 28 providers"/>
</dbReference>
<dbReference type="DNASU" id="9918"/>
<dbReference type="Ensembl" id="ENST00000315579.10">
    <property type="protein sequence ID" value="ENSP00000325017.5"/>
    <property type="gene ID" value="ENSG00000010292.13"/>
</dbReference>
<dbReference type="GeneID" id="9918"/>
<dbReference type="KEGG" id="hsa:9918"/>
<dbReference type="MANE-Select" id="ENST00000315579.10">
    <property type="protein sequence ID" value="ENSP00000325017.5"/>
    <property type="RefSeq nucleotide sequence ID" value="NM_014865.4"/>
    <property type="RefSeq protein sequence ID" value="NP_055680.3"/>
</dbReference>
<dbReference type="UCSC" id="uc001qoo.3">
    <property type="organism name" value="human"/>
</dbReference>
<dbReference type="AGR" id="HGNC:24305"/>
<dbReference type="CTD" id="9918"/>
<dbReference type="DisGeNET" id="9918"/>
<dbReference type="GeneCards" id="NCAPD2"/>
<dbReference type="HGNC" id="HGNC:24305">
    <property type="gene designation" value="NCAPD2"/>
</dbReference>
<dbReference type="HPA" id="ENSG00000010292">
    <property type="expression patterns" value="Tissue enhanced (lymphoid)"/>
</dbReference>
<dbReference type="MalaCards" id="NCAPD2"/>
<dbReference type="MIM" id="615638">
    <property type="type" value="gene"/>
</dbReference>
<dbReference type="MIM" id="617983">
    <property type="type" value="phenotype"/>
</dbReference>
<dbReference type="neXtProt" id="NX_Q15021"/>
<dbReference type="OpenTargets" id="ENSG00000010292"/>
<dbReference type="PharmGKB" id="PA162397021"/>
<dbReference type="VEuPathDB" id="HostDB:ENSG00000010292"/>
<dbReference type="eggNOG" id="KOG0414">
    <property type="taxonomic scope" value="Eukaryota"/>
</dbReference>
<dbReference type="GeneTree" id="ENSGT00940000153566"/>
<dbReference type="HOGENOM" id="CLU_001867_3_1_1"/>
<dbReference type="InParanoid" id="Q15021"/>
<dbReference type="OMA" id="CPLEKLW"/>
<dbReference type="OrthoDB" id="436262at2759"/>
<dbReference type="PAN-GO" id="Q15021">
    <property type="GO annotations" value="4 GO annotations based on evolutionary models"/>
</dbReference>
<dbReference type="PhylomeDB" id="Q15021"/>
<dbReference type="TreeFam" id="TF105712"/>
<dbReference type="PathwayCommons" id="Q15021"/>
<dbReference type="Reactome" id="R-HSA-2514853">
    <property type="pathway name" value="Condensation of Prometaphase Chromosomes"/>
</dbReference>
<dbReference type="SignaLink" id="Q15021"/>
<dbReference type="SIGNOR" id="Q15021"/>
<dbReference type="BioGRID-ORCS" id="9918">
    <property type="hits" value="646 hits in 1163 CRISPR screens"/>
</dbReference>
<dbReference type="ChiTaRS" id="NCAPD2">
    <property type="organism name" value="human"/>
</dbReference>
<dbReference type="GeneWiki" id="NCAPD2"/>
<dbReference type="GenomeRNAi" id="9918"/>
<dbReference type="Pharos" id="Q15021">
    <property type="development level" value="Tbio"/>
</dbReference>
<dbReference type="PRO" id="PR:Q15021"/>
<dbReference type="Proteomes" id="UP000005640">
    <property type="component" value="Chromosome 12"/>
</dbReference>
<dbReference type="RNAct" id="Q15021">
    <property type="molecule type" value="protein"/>
</dbReference>
<dbReference type="Bgee" id="ENSG00000010292">
    <property type="expression patterns" value="Expressed in ventricular zone and 136 other cell types or tissues"/>
</dbReference>
<dbReference type="ExpressionAtlas" id="Q15021">
    <property type="expression patterns" value="baseline and differential"/>
</dbReference>
<dbReference type="GO" id="GO:0034451">
    <property type="term" value="C:centriolar satellite"/>
    <property type="evidence" value="ECO:0000314"/>
    <property type="project" value="HPA"/>
</dbReference>
<dbReference type="GO" id="GO:0036064">
    <property type="term" value="C:ciliary basal body"/>
    <property type="evidence" value="ECO:0000314"/>
    <property type="project" value="HPA"/>
</dbReference>
<dbReference type="GO" id="GO:0000793">
    <property type="term" value="C:condensed chromosome"/>
    <property type="evidence" value="ECO:0000314"/>
    <property type="project" value="MGI"/>
</dbReference>
<dbReference type="GO" id="GO:0000779">
    <property type="term" value="C:condensed chromosome, centromeric region"/>
    <property type="evidence" value="ECO:0000318"/>
    <property type="project" value="GO_Central"/>
</dbReference>
<dbReference type="GO" id="GO:0000794">
    <property type="term" value="C:condensed nuclear chromosome"/>
    <property type="evidence" value="ECO:0000266"/>
    <property type="project" value="ComplexPortal"/>
</dbReference>
<dbReference type="GO" id="GO:0000796">
    <property type="term" value="C:condensin complex"/>
    <property type="evidence" value="ECO:0000314"/>
    <property type="project" value="UniProtKB"/>
</dbReference>
<dbReference type="GO" id="GO:0005737">
    <property type="term" value="C:cytoplasm"/>
    <property type="evidence" value="ECO:0000303"/>
    <property type="project" value="UniProtKB"/>
</dbReference>
<dbReference type="GO" id="GO:0005829">
    <property type="term" value="C:cytosol"/>
    <property type="evidence" value="ECO:0000314"/>
    <property type="project" value="HPA"/>
</dbReference>
<dbReference type="GO" id="GO:0016020">
    <property type="term" value="C:membrane"/>
    <property type="evidence" value="ECO:0007005"/>
    <property type="project" value="UniProtKB"/>
</dbReference>
<dbReference type="GO" id="GO:0005654">
    <property type="term" value="C:nucleoplasm"/>
    <property type="evidence" value="ECO:0000314"/>
    <property type="project" value="HPA"/>
</dbReference>
<dbReference type="GO" id="GO:0005634">
    <property type="term" value="C:nucleus"/>
    <property type="evidence" value="ECO:0000303"/>
    <property type="project" value="UniProtKB"/>
</dbReference>
<dbReference type="GO" id="GO:0042393">
    <property type="term" value="F:histone binding"/>
    <property type="evidence" value="ECO:0000314"/>
    <property type="project" value="UniProtKB"/>
</dbReference>
<dbReference type="GO" id="GO:0051301">
    <property type="term" value="P:cell division"/>
    <property type="evidence" value="ECO:0007669"/>
    <property type="project" value="UniProtKB-KW"/>
</dbReference>
<dbReference type="GO" id="GO:0010032">
    <property type="term" value="P:meiotic chromosome condensation"/>
    <property type="evidence" value="ECO:0000318"/>
    <property type="project" value="GO_Central"/>
</dbReference>
<dbReference type="GO" id="GO:0007076">
    <property type="term" value="P:mitotic chromosome condensation"/>
    <property type="evidence" value="ECO:0000314"/>
    <property type="project" value="UniProtKB"/>
</dbReference>
<dbReference type="GO" id="GO:1905821">
    <property type="term" value="P:positive regulation of chromosome condensation"/>
    <property type="evidence" value="ECO:0000314"/>
    <property type="project" value="ComplexPortal"/>
</dbReference>
<dbReference type="GO" id="GO:0051984">
    <property type="term" value="P:positive regulation of chromosome segregation"/>
    <property type="evidence" value="ECO:0000266"/>
    <property type="project" value="ComplexPortal"/>
</dbReference>
<dbReference type="GO" id="GO:1905820">
    <property type="term" value="P:positive regulation of chromosome separation"/>
    <property type="evidence" value="ECO:0000266"/>
    <property type="project" value="ComplexPortal"/>
</dbReference>
<dbReference type="FunFam" id="1.25.10.10:FF:000695">
    <property type="entry name" value="Condensin complex subunit 1"/>
    <property type="match status" value="1"/>
</dbReference>
<dbReference type="Gene3D" id="1.25.10.10">
    <property type="entry name" value="Leucine-rich Repeat Variant"/>
    <property type="match status" value="1"/>
</dbReference>
<dbReference type="InterPro" id="IPR011989">
    <property type="entry name" value="ARM-like"/>
</dbReference>
<dbReference type="InterPro" id="IPR016024">
    <property type="entry name" value="ARM-type_fold"/>
</dbReference>
<dbReference type="InterPro" id="IPR026971">
    <property type="entry name" value="CND1/NCAPD3"/>
</dbReference>
<dbReference type="InterPro" id="IPR032682">
    <property type="entry name" value="Cnd1_C"/>
</dbReference>
<dbReference type="InterPro" id="IPR007673">
    <property type="entry name" value="Condensin_cplx_su1"/>
</dbReference>
<dbReference type="InterPro" id="IPR024324">
    <property type="entry name" value="Condensin_cplx_su1_N"/>
</dbReference>
<dbReference type="PANTHER" id="PTHR14222">
    <property type="entry name" value="CONDENSIN"/>
    <property type="match status" value="1"/>
</dbReference>
<dbReference type="PANTHER" id="PTHR14222:SF2">
    <property type="entry name" value="CONDENSIN COMPLEX SUBUNIT 1"/>
    <property type="match status" value="1"/>
</dbReference>
<dbReference type="Pfam" id="PF12717">
    <property type="entry name" value="Cnd1"/>
    <property type="match status" value="1"/>
</dbReference>
<dbReference type="Pfam" id="PF12922">
    <property type="entry name" value="Cnd1_N"/>
    <property type="match status" value="1"/>
</dbReference>
<dbReference type="PIRSF" id="PIRSF017127">
    <property type="entry name" value="Condensin_D2"/>
    <property type="match status" value="1"/>
</dbReference>
<dbReference type="SUPFAM" id="SSF48371">
    <property type="entry name" value="ARM repeat"/>
    <property type="match status" value="1"/>
</dbReference>
<evidence type="ECO:0000250" key="1"/>
<evidence type="ECO:0000256" key="2">
    <source>
        <dbReference type="SAM" id="MobiDB-lite"/>
    </source>
</evidence>
<evidence type="ECO:0000269" key="3">
    <source>
    </source>
</evidence>
<evidence type="ECO:0000269" key="4">
    <source>
    </source>
</evidence>
<evidence type="ECO:0000269" key="5">
    <source>
    </source>
</evidence>
<evidence type="ECO:0000269" key="6">
    <source>
    </source>
</evidence>
<evidence type="ECO:0000269" key="7">
    <source>
    </source>
</evidence>
<evidence type="ECO:0000269" key="8">
    <source>
    </source>
</evidence>
<evidence type="ECO:0000269" key="9">
    <source>
    </source>
</evidence>
<evidence type="ECO:0000269" key="10">
    <source ref="3"/>
</evidence>
<evidence type="ECO:0000303" key="11">
    <source>
    </source>
</evidence>
<evidence type="ECO:0000305" key="12"/>
<evidence type="ECO:0000312" key="13">
    <source>
        <dbReference type="HGNC" id="HGNC:24305"/>
    </source>
</evidence>
<evidence type="ECO:0007744" key="14">
    <source>
    </source>
</evidence>
<evidence type="ECO:0007744" key="15">
    <source>
    </source>
</evidence>
<evidence type="ECO:0007744" key="16">
    <source>
    </source>
</evidence>
<evidence type="ECO:0007744" key="17">
    <source>
    </source>
</evidence>
<evidence type="ECO:0007744" key="18">
    <source>
    </source>
</evidence>
<evidence type="ECO:0007744" key="19">
    <source>
    </source>
</evidence>
<evidence type="ECO:0007744" key="20">
    <source>
    </source>
</evidence>
<evidence type="ECO:0007744" key="21">
    <source>
    </source>
</evidence>
<evidence type="ECO:0007744" key="22">
    <source>
    </source>
</evidence>
<evidence type="ECO:0007744" key="23">
    <source>
    </source>
</evidence>
<evidence type="ECO:0007744" key="24">
    <source>
    </source>
</evidence>
<sequence length="1401" mass="157182">MAPQMYEFHLPLSPEELLKSGGVNQYVVQEVLSIKHLPPQLRAFQAAFRAQGPLAMLQHFDTIYSILHHFRSIDPGLKEDTLQFLIKVVSRHSQELPAILDDTTLSGSDRNAHLNALKMNCYALIRLLESFETMASQTNLVDLDLGGKGKKARTKAAHGFDWEEERQPILQLLTQLLQLDIRHLWNHSIIEEEFVSLVTGCCYRLLENPTINHQKNRPTREAITHLLGVALTRYNHMLSATVKIIQMLQHFEHLAPVLVAAVSLWATDYGMKSIVGEIVREIGQKCPQELSRDPSGTKGFAAFLTELAERVPAILMSSMCILLDHLDGENYMMRNAVLAAMAEMVLQVLSGDQLEAAARDTRDQFLDTLQAHGHDVNSFVRSRVLQLFTRIVQQKALPLTRFQAVVALAVGRLADKSVLVCKNAIQLLASFLANNPFSCKLSDADLAGPLQKETQKLQEMRAQRRTAAASAVLDPEEEWEAMLPELKSTLQQLLQLPQGEEEIPEQIANTETTEDVKGRIYQLLAKASYKKAIILTREATGHFQESEPFSHIDPEESEETRLLNILGLIFKGPAASTQEKNPRESTGNMVTGQTVCKNKPNMSDPEESRGNDELVKQEMLVQYLQDAYSFSRKITEAIGIISKMMYENTTTVVQEVIEFFVMVFQFGVPQALFGVRRMLPLIWSKEPGVREAVLNAYRQLYLNPKGDSARAKAQALIQNLSLLLVDASVGTIQCLEEILCEFVQKDELKPAVTQLLWERATEKVACCPLERCSSVMLLGMMARGKPEIVGSNLDTLVSIGLDEKFPQDYRLAQQVCHAIANISDRRKPSLGKRHPPFRLPQEHRLFERLRETVTKGFVHPDPLWIPFKEVAVTLIYQLAEGPEVICAQILQGCAKQALEKLEEKRTSQEDPKESPAMLPTFLLMNLLSLAGDVALQQLVHLEQAVSGELCRRRVLREEQEHKTKDPKEKNTSSETTMEEELGLVGATADDTEAELIRGICEMELLDGKQTLAAFVPLLLKVCNNPGLYSNPDLSAAASLALGKFCMISATFCDSQLRLLFTMLEKSPLPIVRSNLMVATGDLAIRFPNLVDPWTPHLYARLRDPAQQVRKTAGLVMTHLILKDMVKVKGQVSEMAVLLIDPEPQIAALAKNFFNELSHKGNAIYNLLPDIISRLSDPELGVEEEPFHTIMKQLLSYITKDKQTESLVEKLCQRFRTSRTERQQRDLAYCVSQLPLTERGLRKMLDNFDCFGDKLSDESIFSAFLSVVGKLRRGAKPEGKAIIDEFEQKLRACHTRGLDGIKELEIGQAGSQRAPSAKKPSTGSRYQPLASTASDNDFVTPEPRRTTRRHPNTQQRASKKKPKVVFSSDESSEEDLSAEMTEDETPKKTTPILRASARRHRS</sequence>
<protein>
    <recommendedName>
        <fullName>Condensin complex subunit 1</fullName>
    </recommendedName>
    <alternativeName>
        <fullName>Chromosome condensation-related SMC-associated protein 1</fullName>
    </alternativeName>
    <alternativeName>
        <fullName>Chromosome-associated protein D2</fullName>
        <shortName>hCAP-D2</shortName>
    </alternativeName>
    <alternativeName>
        <fullName>Non-SMC condensin I complex subunit D2</fullName>
    </alternativeName>
    <alternativeName>
        <fullName>XCAP-D2 homolog</fullName>
    </alternativeName>
</protein>
<feature type="chain" id="PRO_0000095035" description="Condensin complex subunit 1">
    <location>
        <begin position="1"/>
        <end position="1401"/>
    </location>
</feature>
<feature type="region of interest" description="Interactions with SMC2 and SMC4">
    <location>
        <begin position="1"/>
        <end position="603"/>
    </location>
</feature>
<feature type="region of interest" description="Disordered" evidence="2">
    <location>
        <begin position="576"/>
        <end position="611"/>
    </location>
</feature>
<feature type="region of interest" description="Disordered" evidence="2">
    <location>
        <begin position="956"/>
        <end position="978"/>
    </location>
</feature>
<feature type="region of interest" description="Disordered" evidence="2">
    <location>
        <begin position="1303"/>
        <end position="1401"/>
    </location>
</feature>
<feature type="short sequence motif" description="Bipartite nuclear localization signal">
    <location>
        <begin position="1342"/>
        <end position="1362"/>
    </location>
</feature>
<feature type="compositionally biased region" description="Polar residues" evidence="2">
    <location>
        <begin position="576"/>
        <end position="596"/>
    </location>
</feature>
<feature type="compositionally biased region" description="Basic and acidic residues" evidence="2">
    <location>
        <begin position="956"/>
        <end position="971"/>
    </location>
</feature>
<feature type="compositionally biased region" description="Polar residues" evidence="2">
    <location>
        <begin position="1308"/>
        <end position="1336"/>
    </location>
</feature>
<feature type="compositionally biased region" description="Basic residues" evidence="2">
    <location>
        <begin position="1345"/>
        <end position="1362"/>
    </location>
</feature>
<feature type="compositionally biased region" description="Acidic residues" evidence="2">
    <location>
        <begin position="1369"/>
        <end position="1382"/>
    </location>
</feature>
<feature type="modified residue" description="Phosphoserine" evidence="21">
    <location>
        <position position="20"/>
    </location>
</feature>
<feature type="modified residue" description="Phosphoserine" evidence="18 24">
    <location>
        <position position="585"/>
    </location>
</feature>
<feature type="modified residue" description="Phosphoserine" evidence="16 24">
    <location>
        <position position="1310"/>
    </location>
</feature>
<feature type="modified residue" description="Phosphoserine" evidence="24">
    <location>
        <position position="1315"/>
    </location>
</feature>
<feature type="modified residue" description="Phosphoserine" evidence="18 24">
    <location>
        <position position="1330"/>
    </location>
</feature>
<feature type="modified residue" description="Phosphothreonine" evidence="18 24">
    <location>
        <position position="1331"/>
    </location>
</feature>
<feature type="modified residue" description="Phosphoserine" evidence="18 20 21 23 24">
    <location>
        <position position="1333"/>
    </location>
</feature>
<feature type="modified residue" description="Phosphothreonine" evidence="14 17 18 19 20 21 24">
    <location>
        <position position="1339"/>
    </location>
</feature>
<feature type="modified residue" description="Phosphoserine" evidence="18">
    <location>
        <position position="1366"/>
    </location>
</feature>
<feature type="modified residue" description="Phosphoserine" evidence="18">
    <location>
        <position position="1367"/>
    </location>
</feature>
<feature type="modified residue" description="Phosphoserine" evidence="18">
    <location>
        <position position="1370"/>
    </location>
</feature>
<feature type="modified residue" description="Phosphoserine" evidence="18">
    <location>
        <position position="1371"/>
    </location>
</feature>
<feature type="modified residue" description="Phosphoserine" evidence="15">
    <location>
        <position position="1376"/>
    </location>
</feature>
<feature type="modified residue" description="Phosphothreonine; by CDK1" evidence="1">
    <location>
        <position position="1384"/>
    </location>
</feature>
<feature type="modified residue" description="Phosphothreonine; by CDK1" evidence="1">
    <location>
        <position position="1389"/>
    </location>
</feature>
<feature type="modified residue" description="Phosphoserine" evidence="24">
    <location>
        <position position="1395"/>
    </location>
</feature>
<feature type="sequence variant" id="VAR_080953" description="In MCPH21; uncertain significance." evidence="8">
    <original>F</original>
    <variation>S</variation>
    <location>
        <position position="8"/>
    </location>
</feature>
<feature type="sequence variant" id="VAR_024421" description="In dbSNP:rs714774." evidence="6 9 10 22">
    <original>Q</original>
    <variation>E</variation>
    <location>
        <position position="83"/>
    </location>
</feature>
<feature type="sequence variant" id="VAR_057511" description="In dbSNP:rs17725914.">
    <original>K</original>
    <variation>R</variation>
    <location>
        <position position="580"/>
    </location>
</feature>
<feature type="sequence variant" id="VAR_024422" description="In dbSNP:rs10849482.">
    <original>V</original>
    <variation>M</variation>
    <location>
        <position position="797"/>
    </location>
</feature>
<feature type="sequence variant" id="VAR_058713" description="In dbSNP:rs2240871." evidence="6">
    <original>T</original>
    <variation>S</variation>
    <location>
        <position position="1321"/>
    </location>
</feature>
<feature type="mutagenesis site" description="Abolishes localization to the nucleus, while it only reduces chromosome binding." evidence="5">
    <original>RRTTRR</original>
    <variation>AATTAA</variation>
    <location>
        <begin position="1343"/>
        <end position="1348"/>
    </location>
</feature>
<feature type="mutagenesis site" description="Abolishes localization to the nucleus, while it only reduces chromosome binding." evidence="5">
    <original>KKK</original>
    <variation>AAA</variation>
    <location>
        <begin position="1358"/>
        <end position="1360"/>
    </location>
</feature>
<feature type="sequence conflict" description="In Ref. 1; BAA09930." evidence="12" ref="1">
    <original>M</original>
    <variation>I</variation>
    <location>
        <position position="1062"/>
    </location>
</feature>
<feature type="sequence conflict" description="In Ref. 1; BAA09930." evidence="12" ref="1">
    <original>R</original>
    <variation>L</variation>
    <location>
        <position position="1218"/>
    </location>
</feature>
<keyword id="KW-0131">Cell cycle</keyword>
<keyword id="KW-0132">Cell division</keyword>
<keyword id="KW-0158">Chromosome</keyword>
<keyword id="KW-0963">Cytoplasm</keyword>
<keyword id="KW-0903">Direct protein sequencing</keyword>
<keyword id="KW-0225">Disease variant</keyword>
<keyword id="KW-0226">DNA condensation</keyword>
<keyword id="KW-0498">Mitosis</keyword>
<keyword id="KW-0539">Nucleus</keyword>
<keyword id="KW-0597">Phosphoprotein</keyword>
<keyword id="KW-0905">Primary microcephaly</keyword>
<keyword id="KW-1267">Proteomics identification</keyword>
<keyword id="KW-1185">Reference proteome</keyword>
<gene>
    <name evidence="11 13" type="primary">NCAPD2</name>
    <name type="synonym">CAPD2</name>
    <name type="synonym">CNAP1</name>
    <name type="synonym">KIAA0159</name>
</gene>
<organism>
    <name type="scientific">Homo sapiens</name>
    <name type="common">Human</name>
    <dbReference type="NCBI Taxonomy" id="9606"/>
    <lineage>
        <taxon>Eukaryota</taxon>
        <taxon>Metazoa</taxon>
        <taxon>Chordata</taxon>
        <taxon>Craniata</taxon>
        <taxon>Vertebrata</taxon>
        <taxon>Euteleostomi</taxon>
        <taxon>Mammalia</taxon>
        <taxon>Eutheria</taxon>
        <taxon>Euarchontoglires</taxon>
        <taxon>Primates</taxon>
        <taxon>Haplorrhini</taxon>
        <taxon>Catarrhini</taxon>
        <taxon>Hominidae</taxon>
        <taxon>Homo</taxon>
    </lineage>
</organism>
<name>CND1_HUMAN</name>
<comment type="function">
    <text evidence="4 7">Regulatory subunit of the condensin complex, a complex required for conversion of interphase chromatin into mitotic-like condense chromosomes. The condensin complex probably introduces positive supercoils into relaxed DNA in the presence of type I topoisomerases and converts nicked DNA into positive knotted forms in the presence of type II topoisomerases. May target the condensin complex to DNA via its C-terminal domain (PubMed:11136719). May promote the resolution of double-strand DNA catenanes (intertwines) between sister chromatids. Condensin-mediated compaction likely increases tension in catenated sister chromatids, providing directionality for type II topoisomerase-mediated strand exchanges toward chromatid decatenation. Required for decatenation of non-centromeric ultrafine DNA bridges during anaphase. Early in neurogenesis, may play an essential role to ensure accurate mitotic chromosome condensation in neuron stem cells, ultimately affecting neuron pool and cortex size (PubMed:27737959).</text>
</comment>
<comment type="subunit">
    <text evidence="3 4 5">Component of the condensin complex, which contains the SMC2 and SMC4 heterodimer, and three non SMC subunits that probably regulate the complex: NCAPH/BRRN1, NCAPD2/CAPD2 and NCAPG. Interacts with histones H1 and H3.</text>
</comment>
<comment type="interaction">
    <interactant intactId="EBI-1044041">
        <id>Q15021</id>
    </interactant>
    <interactant intactId="EBI-970214">
        <id>Q9BPX3</id>
        <label>NCAPG</label>
    </interactant>
    <organismsDiffer>false</organismsDiffer>
    <experiments>2</experiments>
</comment>
<comment type="interaction">
    <interactant intactId="EBI-1044041">
        <id>Q15021</id>
    </interactant>
    <interactant intactId="EBI-1046410">
        <id>Q15003</id>
        <label>NCAPH</label>
    </interactant>
    <organismsDiffer>false</organismsDiffer>
    <experiments>8</experiments>
</comment>
<comment type="subcellular location">
    <subcellularLocation>
        <location evidence="3">Nucleus</location>
    </subcellularLocation>
    <subcellularLocation>
        <location evidence="3">Cytoplasm</location>
    </subcellularLocation>
    <subcellularLocation>
        <location evidence="3">Chromosome</location>
    </subcellularLocation>
    <text>In interphase cells, the majority of the condensin complex is found in the cytoplasm, while a minority of the complex is associated with chromatin. A subpopulation of the complex however remains associated with chromosome foci in interphase cells. During mitosis, most of the condensin complex is associated with the chromatin. At the onset of prophase, the regulatory subunits of the complex are phosphorylated by CDK1, leading to condensin's association with chromosome arms and to chromosome condensation. Dissociation from chromosomes is observed in late telophase.</text>
</comment>
<comment type="domain">
    <text>The C-terminal domain interacts with histones H1 and H3, and may be responsible for condensin complex targeting to mitotic chromosomes. This domain is independent from the bipartite nuclear localization signal, although they are contained within the same region.</text>
</comment>
<comment type="PTM">
    <text evidence="1">Phosphorylated by CDK1. Its phosphorylation, as well as that of NCAPH and NCAPG subunits, activates the condensin complex and is required for chromosome condensation (By similarity).</text>
</comment>
<comment type="disease" evidence="7 8">
    <disease id="DI-05234">
        <name>Microcephaly 21, primary, autosomal recessive</name>
        <acronym>MCPH21</acronym>
        <description>A form of microcephaly, a disease defined as a head circumference more than 3 standard deviations below the age, sex and ethnically matched mean. Brain weight is markedly reduced and the cerebral cortex is disproportionately small. MCPH21 features include mild intellectual disability, intrauterine growth retardation, short stature, and microcephaly.</description>
        <dbReference type="MIM" id="617983"/>
    </disease>
    <text>The disease is caused by variants affecting the gene represented in this entry.</text>
</comment>
<comment type="similarity">
    <text evidence="12">Belongs to the CND1 (condensin subunit 1) family.</text>
</comment>
<comment type="sequence caution" evidence="12">
    <conflict type="erroneous initiation">
        <sequence resource="EMBL-CDS" id="BAA09930"/>
    </conflict>
    <text>Extended N-terminus.</text>
</comment>
<reference key="1">
    <citation type="journal article" date="1995" name="DNA Res.">
        <title>Prediction of the coding sequences of unidentified human genes. IV. The coding sequences of 40 new genes (KIAA0121-KIAA0160) deduced by analysis of cDNA clones from human cell line KG-1.</title>
        <authorList>
            <person name="Nagase T."/>
            <person name="Seki N."/>
            <person name="Tanaka A."/>
            <person name="Ishikawa K."/>
            <person name="Nomura N."/>
        </authorList>
    </citation>
    <scope>NUCLEOTIDE SEQUENCE [LARGE SCALE MRNA]</scope>
    <scope>VARIANT GLU-83</scope>
    <source>
        <tissue>Bone marrow</tissue>
    </source>
</reference>
<reference key="2">
    <citation type="journal article" date="2006" name="Nature">
        <title>The finished DNA sequence of human chromosome 12.</title>
        <authorList>
            <person name="Scherer S.E."/>
            <person name="Muzny D.M."/>
            <person name="Buhay C.J."/>
            <person name="Chen R."/>
            <person name="Cree A."/>
            <person name="Ding Y."/>
            <person name="Dugan-Rocha S."/>
            <person name="Gill R."/>
            <person name="Gunaratne P."/>
            <person name="Harris R.A."/>
            <person name="Hawes A.C."/>
            <person name="Hernandez J."/>
            <person name="Hodgson A.V."/>
            <person name="Hume J."/>
            <person name="Jackson A."/>
            <person name="Khan Z.M."/>
            <person name="Kovar-Smith C."/>
            <person name="Lewis L.R."/>
            <person name="Lozado R.J."/>
            <person name="Metzker M.L."/>
            <person name="Milosavljevic A."/>
            <person name="Miner G.R."/>
            <person name="Montgomery K.T."/>
            <person name="Morgan M.B."/>
            <person name="Nazareth L.V."/>
            <person name="Scott G."/>
            <person name="Sodergren E."/>
            <person name="Song X.-Z."/>
            <person name="Steffen D."/>
            <person name="Lovering R.C."/>
            <person name="Wheeler D.A."/>
            <person name="Worley K.C."/>
            <person name="Yuan Y."/>
            <person name="Zhang Z."/>
            <person name="Adams C.Q."/>
            <person name="Ansari-Lari M.A."/>
            <person name="Ayele M."/>
            <person name="Brown M.J."/>
            <person name="Chen G."/>
            <person name="Chen Z."/>
            <person name="Clerc-Blankenburg K.P."/>
            <person name="Davis C."/>
            <person name="Delgado O."/>
            <person name="Dinh H.H."/>
            <person name="Draper H."/>
            <person name="Gonzalez-Garay M.L."/>
            <person name="Havlak P."/>
            <person name="Jackson L.R."/>
            <person name="Jacob L.S."/>
            <person name="Kelly S.H."/>
            <person name="Li L."/>
            <person name="Li Z."/>
            <person name="Liu J."/>
            <person name="Liu W."/>
            <person name="Lu J."/>
            <person name="Maheshwari M."/>
            <person name="Nguyen B.-V."/>
            <person name="Okwuonu G.O."/>
            <person name="Pasternak S."/>
            <person name="Perez L.M."/>
            <person name="Plopper F.J.H."/>
            <person name="Santibanez J."/>
            <person name="Shen H."/>
            <person name="Tabor P.E."/>
            <person name="Verduzco D."/>
            <person name="Waldron L."/>
            <person name="Wang Q."/>
            <person name="Williams G.A."/>
            <person name="Zhang J."/>
            <person name="Zhou J."/>
            <person name="Allen C.C."/>
            <person name="Amin A.G."/>
            <person name="Anyalebechi V."/>
            <person name="Bailey M."/>
            <person name="Barbaria J.A."/>
            <person name="Bimage K.E."/>
            <person name="Bryant N.P."/>
            <person name="Burch P.E."/>
            <person name="Burkett C.E."/>
            <person name="Burrell K.L."/>
            <person name="Calderon E."/>
            <person name="Cardenas V."/>
            <person name="Carter K."/>
            <person name="Casias K."/>
            <person name="Cavazos I."/>
            <person name="Cavazos S.R."/>
            <person name="Ceasar H."/>
            <person name="Chacko J."/>
            <person name="Chan S.N."/>
            <person name="Chavez D."/>
            <person name="Christopoulos C."/>
            <person name="Chu J."/>
            <person name="Cockrell R."/>
            <person name="Cox C.D."/>
            <person name="Dang M."/>
            <person name="Dathorne S.R."/>
            <person name="David R."/>
            <person name="Davis C.M."/>
            <person name="Davy-Carroll L."/>
            <person name="Deshazo D.R."/>
            <person name="Donlin J.E."/>
            <person name="D'Souza L."/>
            <person name="Eaves K.A."/>
            <person name="Egan A."/>
            <person name="Emery-Cohen A.J."/>
            <person name="Escotto M."/>
            <person name="Flagg N."/>
            <person name="Forbes L.D."/>
            <person name="Gabisi A.M."/>
            <person name="Garza M."/>
            <person name="Hamilton C."/>
            <person name="Henderson N."/>
            <person name="Hernandez O."/>
            <person name="Hines S."/>
            <person name="Hogues M.E."/>
            <person name="Huang M."/>
            <person name="Idlebird D.G."/>
            <person name="Johnson R."/>
            <person name="Jolivet A."/>
            <person name="Jones S."/>
            <person name="Kagan R."/>
            <person name="King L.M."/>
            <person name="Leal B."/>
            <person name="Lebow H."/>
            <person name="Lee S."/>
            <person name="LeVan J.M."/>
            <person name="Lewis L.C."/>
            <person name="London P."/>
            <person name="Lorensuhewa L.M."/>
            <person name="Loulseged H."/>
            <person name="Lovett D.A."/>
            <person name="Lucier A."/>
            <person name="Lucier R.L."/>
            <person name="Ma J."/>
            <person name="Madu R.C."/>
            <person name="Mapua P."/>
            <person name="Martindale A.D."/>
            <person name="Martinez E."/>
            <person name="Massey E."/>
            <person name="Mawhiney S."/>
            <person name="Meador M.G."/>
            <person name="Mendez S."/>
            <person name="Mercado C."/>
            <person name="Mercado I.C."/>
            <person name="Merritt C.E."/>
            <person name="Miner Z.L."/>
            <person name="Minja E."/>
            <person name="Mitchell T."/>
            <person name="Mohabbat F."/>
            <person name="Mohabbat K."/>
            <person name="Montgomery B."/>
            <person name="Moore N."/>
            <person name="Morris S."/>
            <person name="Munidasa M."/>
            <person name="Ngo R.N."/>
            <person name="Nguyen N.B."/>
            <person name="Nickerson E."/>
            <person name="Nwaokelemeh O.O."/>
            <person name="Nwokenkwo S."/>
            <person name="Obregon M."/>
            <person name="Oguh M."/>
            <person name="Oragunye N."/>
            <person name="Oviedo R.J."/>
            <person name="Parish B.J."/>
            <person name="Parker D.N."/>
            <person name="Parrish J."/>
            <person name="Parks K.L."/>
            <person name="Paul H.A."/>
            <person name="Payton B.A."/>
            <person name="Perez A."/>
            <person name="Perrin W."/>
            <person name="Pickens A."/>
            <person name="Primus E.L."/>
            <person name="Pu L.-L."/>
            <person name="Puazo M."/>
            <person name="Quiles M.M."/>
            <person name="Quiroz J.B."/>
            <person name="Rabata D."/>
            <person name="Reeves K."/>
            <person name="Ruiz S.J."/>
            <person name="Shao H."/>
            <person name="Sisson I."/>
            <person name="Sonaike T."/>
            <person name="Sorelle R.P."/>
            <person name="Sutton A.E."/>
            <person name="Svatek A.F."/>
            <person name="Svetz L.A."/>
            <person name="Tamerisa K.S."/>
            <person name="Taylor T.R."/>
            <person name="Teague B."/>
            <person name="Thomas N."/>
            <person name="Thorn R.D."/>
            <person name="Trejos Z.Y."/>
            <person name="Trevino B.K."/>
            <person name="Ukegbu O.N."/>
            <person name="Urban J.B."/>
            <person name="Vasquez L.I."/>
            <person name="Vera V.A."/>
            <person name="Villasana D.M."/>
            <person name="Wang L."/>
            <person name="Ward-Moore S."/>
            <person name="Warren J.T."/>
            <person name="Wei X."/>
            <person name="White F."/>
            <person name="Williamson A.L."/>
            <person name="Wleczyk R."/>
            <person name="Wooden H.S."/>
            <person name="Wooden S.H."/>
            <person name="Yen J."/>
            <person name="Yoon L."/>
            <person name="Yoon V."/>
            <person name="Zorrilla S.E."/>
            <person name="Nelson D."/>
            <person name="Kucherlapati R."/>
            <person name="Weinstock G."/>
            <person name="Gibbs R.A."/>
        </authorList>
    </citation>
    <scope>NUCLEOTIDE SEQUENCE [LARGE SCALE GENOMIC DNA]</scope>
</reference>
<reference key="3">
    <citation type="submission" date="2005-09" db="EMBL/GenBank/DDBJ databases">
        <authorList>
            <person name="Mural R.J."/>
            <person name="Istrail S."/>
            <person name="Sutton G.G."/>
            <person name="Florea L."/>
            <person name="Halpern A.L."/>
            <person name="Mobarry C.M."/>
            <person name="Lippert R."/>
            <person name="Walenz B."/>
            <person name="Shatkay H."/>
            <person name="Dew I."/>
            <person name="Miller J.R."/>
            <person name="Flanigan M.J."/>
            <person name="Edwards N.J."/>
            <person name="Bolanos R."/>
            <person name="Fasulo D."/>
            <person name="Halldorsson B.V."/>
            <person name="Hannenhalli S."/>
            <person name="Turner R."/>
            <person name="Yooseph S."/>
            <person name="Lu F."/>
            <person name="Nusskern D.R."/>
            <person name="Shue B.C."/>
            <person name="Zheng X.H."/>
            <person name="Zhong F."/>
            <person name="Delcher A.L."/>
            <person name="Huson D.H."/>
            <person name="Kravitz S.A."/>
            <person name="Mouchard L."/>
            <person name="Reinert K."/>
            <person name="Remington K.A."/>
            <person name="Clark A.G."/>
            <person name="Waterman M.S."/>
            <person name="Eichler E.E."/>
            <person name="Adams M.D."/>
            <person name="Hunkapiller M.W."/>
            <person name="Myers E.W."/>
            <person name="Venter J.C."/>
        </authorList>
    </citation>
    <scope>NUCLEOTIDE SEQUENCE [LARGE SCALE GENOMIC DNA]</scope>
    <scope>VARIANT GLU-83</scope>
</reference>
<reference key="4">
    <citation type="journal article" date="2004" name="Genome Res.">
        <title>The status, quality, and expansion of the NIH full-length cDNA project: the Mammalian Gene Collection (MGC).</title>
        <authorList>
            <consortium name="The MGC Project Team"/>
        </authorList>
    </citation>
    <scope>NUCLEOTIDE SEQUENCE [LARGE SCALE MRNA]</scope>
    <scope>VARIANTS GLU-83 AND SER-1321</scope>
    <source>
        <tissue>Mammary gland</tissue>
    </source>
</reference>
<reference key="5">
    <citation type="journal article" date="2000" name="Mol. Cell. Biol.">
        <title>A human condensin complex containing hCAP-C-hCAP-E and CNAP1, a homolog of Xenopus XCAP-D2, colocalizes with phosphorylated histone H3 during the early stage of mitotic chromosome condensation.</title>
        <authorList>
            <person name="Schmiesing J.A."/>
            <person name="Gregson H.C."/>
            <person name="Zhou S."/>
            <person name="Yokomori K."/>
        </authorList>
    </citation>
    <scope>PROTEIN SEQUENCE OF 359-365; 537-560; 698-709 AND 1324-1331</scope>
    <scope>IDENTIFICATION IN A CONDENSIN COMPLEX WITH SMC2 AND SMC4</scope>
    <scope>SUBCELLULAR LOCATION</scope>
</reference>
<reference key="6">
    <citation type="journal article" date="2001" name="J. Biol. Chem.">
        <title>Chromosome condensation by a human condensin complex in Xenopus egg extracts.</title>
        <authorList>
            <person name="Kimura K."/>
            <person name="Cuvier O."/>
            <person name="Hirano T."/>
        </authorList>
    </citation>
    <scope>IDENTIFICATION IN A CONDENSIN COMPLEX WITH SMC2; SMC4; NCAPH AND NCAPG</scope>
    <scope>FUNCTION OF THE CONDENSIN COMPLEX</scope>
</reference>
<reference key="7">
    <citation type="journal article" date="2002" name="Mol. Cell. Biol.">
        <title>Identification of a chromosome-targeting domain in the human condensin subunit CNAP1/hCAP-D2/Eg7.</title>
        <authorList>
            <person name="Ball A.R. Jr."/>
            <person name="Schmiesing J.A."/>
            <person name="Zhou C."/>
            <person name="Gregson H.C."/>
            <person name="Okada Y."/>
            <person name="Doi T."/>
            <person name="Yokomori K."/>
        </authorList>
    </citation>
    <scope>INTERACTION WITH HISTONE H1 AND HISTONE H3</scope>
    <scope>MUTAGENESIS OF 1343-ARG--ARG-1348 AND 1358-LYS--LYS-1360</scope>
</reference>
<reference key="8">
    <citation type="journal article" date="2006" name="Cell">
        <title>Global, in vivo, and site-specific phosphorylation dynamics in signaling networks.</title>
        <authorList>
            <person name="Olsen J.V."/>
            <person name="Blagoev B."/>
            <person name="Gnad F."/>
            <person name="Macek B."/>
            <person name="Kumar C."/>
            <person name="Mortensen P."/>
            <person name="Mann M."/>
        </authorList>
    </citation>
    <scope>PHOSPHORYLATION [LARGE SCALE ANALYSIS] AT SER-1376</scope>
    <scope>IDENTIFICATION BY MASS SPECTROMETRY [LARGE SCALE ANALYSIS]</scope>
    <source>
        <tissue>Cervix carcinoma</tissue>
    </source>
</reference>
<reference key="9">
    <citation type="journal article" date="2006" name="Nat. Biotechnol.">
        <title>A probability-based approach for high-throughput protein phosphorylation analysis and site localization.</title>
        <authorList>
            <person name="Beausoleil S.A."/>
            <person name="Villen J."/>
            <person name="Gerber S.A."/>
            <person name="Rush J."/>
            <person name="Gygi S.P."/>
        </authorList>
    </citation>
    <scope>PHOSPHORYLATION [LARGE SCALE ANALYSIS] AT THR-1339</scope>
    <scope>IDENTIFICATION BY MASS SPECTROMETRY [LARGE SCALE ANALYSIS]</scope>
    <source>
        <tissue>Cervix carcinoma</tissue>
    </source>
</reference>
<reference key="10">
    <citation type="journal article" date="2007" name="Science">
        <title>ATM and ATR substrate analysis reveals extensive protein networks responsive to DNA damage.</title>
        <authorList>
            <person name="Matsuoka S."/>
            <person name="Ballif B.A."/>
            <person name="Smogorzewska A."/>
            <person name="McDonald E.R. III"/>
            <person name="Hurov K.E."/>
            <person name="Luo J."/>
            <person name="Bakalarski C.E."/>
            <person name="Zhao Z."/>
            <person name="Solimini N."/>
            <person name="Lerenthal Y."/>
            <person name="Shiloh Y."/>
            <person name="Gygi S.P."/>
            <person name="Elledge S.J."/>
        </authorList>
    </citation>
    <scope>PHOSPHORYLATION [LARGE SCALE ANALYSIS] AT SER-1310</scope>
    <scope>IDENTIFICATION BY MASS SPECTROMETRY [LARGE SCALE ANALYSIS]</scope>
    <source>
        <tissue>Embryonic kidney</tissue>
    </source>
</reference>
<reference key="11">
    <citation type="journal article" date="2008" name="J. Proteome Res.">
        <title>Combining protein-based IMAC, peptide-based IMAC, and MudPIT for efficient phosphoproteomic analysis.</title>
        <authorList>
            <person name="Cantin G.T."/>
            <person name="Yi W."/>
            <person name="Lu B."/>
            <person name="Park S.K."/>
            <person name="Xu T."/>
            <person name="Lee J.-D."/>
            <person name="Yates J.R. III"/>
        </authorList>
    </citation>
    <scope>PHOSPHORYLATION [LARGE SCALE ANALYSIS] AT THR-1339</scope>
    <scope>IDENTIFICATION BY MASS SPECTROMETRY [LARGE SCALE ANALYSIS]</scope>
    <source>
        <tissue>Cervix carcinoma</tissue>
    </source>
</reference>
<reference key="12">
    <citation type="journal article" date="2008" name="Mol. Cell">
        <title>Kinase-selective enrichment enables quantitative phosphoproteomics of the kinome across the cell cycle.</title>
        <authorList>
            <person name="Daub H."/>
            <person name="Olsen J.V."/>
            <person name="Bairlein M."/>
            <person name="Gnad F."/>
            <person name="Oppermann F.S."/>
            <person name="Korner R."/>
            <person name="Greff Z."/>
            <person name="Keri G."/>
            <person name="Stemmann O."/>
            <person name="Mann M."/>
        </authorList>
    </citation>
    <scope>PHOSPHORYLATION [LARGE SCALE ANALYSIS] AT THR-1339</scope>
    <scope>IDENTIFICATION BY MASS SPECTROMETRY [LARGE SCALE ANALYSIS]</scope>
    <source>
        <tissue>Cervix carcinoma</tissue>
    </source>
</reference>
<reference key="13">
    <citation type="journal article" date="2008" name="Proc. Natl. Acad. Sci. U.S.A.">
        <title>A quantitative atlas of mitotic phosphorylation.</title>
        <authorList>
            <person name="Dephoure N."/>
            <person name="Zhou C."/>
            <person name="Villen J."/>
            <person name="Beausoleil S.A."/>
            <person name="Bakalarski C.E."/>
            <person name="Elledge S.J."/>
            <person name="Gygi S.P."/>
        </authorList>
    </citation>
    <scope>PHOSPHORYLATION [LARGE SCALE ANALYSIS] AT SER-585; SER-1330; THR-1331; SER-1333; THR-1339; SER-1366; SER-1367; SER-1370 AND SER-1371</scope>
    <scope>IDENTIFICATION BY MASS SPECTROMETRY [LARGE SCALE ANALYSIS]</scope>
    <source>
        <tissue>Cervix carcinoma</tissue>
    </source>
</reference>
<reference key="14">
    <citation type="journal article" date="2009" name="Anal. Chem.">
        <title>Lys-N and trypsin cover complementary parts of the phosphoproteome in a refined SCX-based approach.</title>
        <authorList>
            <person name="Gauci S."/>
            <person name="Helbig A.O."/>
            <person name="Slijper M."/>
            <person name="Krijgsveld J."/>
            <person name="Heck A.J."/>
            <person name="Mohammed S."/>
        </authorList>
    </citation>
    <scope>IDENTIFICATION BY MASS SPECTROMETRY [LARGE SCALE ANALYSIS]</scope>
</reference>
<reference key="15">
    <citation type="journal article" date="2009" name="Sci. Signal.">
        <title>Quantitative phosphoproteomic analysis of T cell receptor signaling reveals system-wide modulation of protein-protein interactions.</title>
        <authorList>
            <person name="Mayya V."/>
            <person name="Lundgren D.H."/>
            <person name="Hwang S.-I."/>
            <person name="Rezaul K."/>
            <person name="Wu L."/>
            <person name="Eng J.K."/>
            <person name="Rodionov V."/>
            <person name="Han D.K."/>
        </authorList>
    </citation>
    <scope>PHOSPHORYLATION [LARGE SCALE ANALYSIS] AT SER-1333 AND THR-1339</scope>
    <scope>IDENTIFICATION BY MASS SPECTROMETRY [LARGE SCALE ANALYSIS]</scope>
    <source>
        <tissue>Leukemic T-cell</tissue>
    </source>
</reference>
<reference key="16">
    <citation type="journal article" date="2010" name="Sci. Signal.">
        <title>Quantitative phosphoproteomics reveals widespread full phosphorylation site occupancy during mitosis.</title>
        <authorList>
            <person name="Olsen J.V."/>
            <person name="Vermeulen M."/>
            <person name="Santamaria A."/>
            <person name="Kumar C."/>
            <person name="Miller M.L."/>
            <person name="Jensen L.J."/>
            <person name="Gnad F."/>
            <person name="Cox J."/>
            <person name="Jensen T.S."/>
            <person name="Nigg E.A."/>
            <person name="Brunak S."/>
            <person name="Mann M."/>
        </authorList>
    </citation>
    <scope>PHOSPHORYLATION [LARGE SCALE ANALYSIS] AT SER-20; SER-1333 AND THR-1339</scope>
    <scope>IDENTIFICATION BY MASS SPECTROMETRY [LARGE SCALE ANALYSIS]</scope>
    <source>
        <tissue>Cervix carcinoma</tissue>
    </source>
</reference>
<reference key="17">
    <citation type="journal article" date="2011" name="Sci. Signal.">
        <title>System-wide temporal characterization of the proteome and phosphoproteome of human embryonic stem cell differentiation.</title>
        <authorList>
            <person name="Rigbolt K.T."/>
            <person name="Prokhorova T.A."/>
            <person name="Akimov V."/>
            <person name="Henningsen J."/>
            <person name="Johansen P.T."/>
            <person name="Kratchmarova I."/>
            <person name="Kassem M."/>
            <person name="Mann M."/>
            <person name="Olsen J.V."/>
            <person name="Blagoev B."/>
        </authorList>
    </citation>
    <scope>PHOSPHORYLATION [LARGE SCALE ANALYSIS] AT SER-1333</scope>
    <scope>IDENTIFICATION BY MASS SPECTROMETRY [LARGE SCALE ANALYSIS]</scope>
</reference>
<reference key="18">
    <citation type="journal article" date="2013" name="J. Proteome Res.">
        <title>Toward a comprehensive characterization of a human cancer cell phosphoproteome.</title>
        <authorList>
            <person name="Zhou H."/>
            <person name="Di Palma S."/>
            <person name="Preisinger C."/>
            <person name="Peng M."/>
            <person name="Polat A.N."/>
            <person name="Heck A.J."/>
            <person name="Mohammed S."/>
        </authorList>
    </citation>
    <scope>PHOSPHORYLATION [LARGE SCALE ANALYSIS] AT SER-585; SER-1310; SER-1315; SER-1330; THR-1331; SER-1333; THR-1339 AND SER-1395</scope>
    <scope>IDENTIFICATION BY MASS SPECTROMETRY [LARGE SCALE ANALYSIS]</scope>
    <source>
        <tissue>Cervix carcinoma</tissue>
        <tissue>Erythroleukemia</tissue>
    </source>
</reference>
<reference key="19">
    <citation type="journal article" date="2015" name="Proteomics">
        <title>N-terminome analysis of the human mitochondrial proteome.</title>
        <authorList>
            <person name="Vaca Jacome A.S."/>
            <person name="Rabilloud T."/>
            <person name="Schaeffer-Reiss C."/>
            <person name="Rompais M."/>
            <person name="Ayoub D."/>
            <person name="Lane L."/>
            <person name="Bairoch A."/>
            <person name="Van Dorsselaer A."/>
            <person name="Carapito C."/>
        </authorList>
    </citation>
    <scope>IDENTIFICATION BY MASS SPECTROMETRY [LARGE SCALE ANALYSIS]</scope>
</reference>
<reference key="20">
    <citation type="journal article" date="2011" name="BMC Syst. Biol.">
        <title>Initial characterization of the human central proteome.</title>
        <authorList>
            <person name="Burkard T.R."/>
            <person name="Planyavsky M."/>
            <person name="Kaupe I."/>
            <person name="Breitwieser F.P."/>
            <person name="Buerckstuemmer T."/>
            <person name="Bennett K.L."/>
            <person name="Superti-Furga G."/>
            <person name="Colinge J."/>
        </authorList>
    </citation>
    <scope>VARIANT [LARGE SCALE ANALYSIS] GLU-83</scope>
    <scope>IDENTIFICATION BY MASS SPECTROMETRY [LARGE SCALE ANALYSIS]</scope>
</reference>
<reference key="21">
    <citation type="journal article" date="2016" name="Genes Dev.">
        <title>Mutations in genes encoding condensin complex proteins cause microcephaly through decatenation failure at mitosis.</title>
        <authorList>
            <consortium name="Deciphering Developmental Disorders Study"/>
            <person name="Martin C.A."/>
            <person name="Murray J.E."/>
            <person name="Carroll P."/>
            <person name="Leitch A."/>
            <person name="Mackenzie K.J."/>
            <person name="Halachev M."/>
            <person name="Fetit A.E."/>
            <person name="Keith C."/>
            <person name="Bicknell L.S."/>
            <person name="Fluteau A."/>
            <person name="Gautier P."/>
            <person name="Hall E.A."/>
            <person name="Joss S."/>
            <person name="Soares G."/>
            <person name="Silva J."/>
            <person name="Bober M.B."/>
            <person name="Duker A."/>
            <person name="Wise C.A."/>
            <person name="Quigley A.J."/>
            <person name="Phadke S.R."/>
            <person name="Wood A.J."/>
            <person name="Vagnarelli P."/>
            <person name="Jackson A.P."/>
        </authorList>
    </citation>
    <scope>INVOLVEMENT IN MCPH21</scope>
    <scope>FUNCTION</scope>
</reference>
<reference key="22">
    <citation type="journal article" date="2017" name="JAMA Psychiatry">
        <title>Diagnostic yield and novel candidate genes by exome sequencing in 152 consanguineous families with neurodevelopmental disorders.</title>
        <authorList>
            <person name="Reuter M.S."/>
            <person name="Tawamie H."/>
            <person name="Buchert R."/>
            <person name="Hosny Gebril O."/>
            <person name="Froukh T."/>
            <person name="Thiel C."/>
            <person name="Uebe S."/>
            <person name="Ekici A.B."/>
            <person name="Krumbiegel M."/>
            <person name="Zweier C."/>
            <person name="Hoyer J."/>
            <person name="Eberlein K."/>
            <person name="Bauer J."/>
            <person name="Scheller U."/>
            <person name="Strom T.M."/>
            <person name="Hoffjan S."/>
            <person name="Abdelraouf E.R."/>
            <person name="Meguid N.A."/>
            <person name="Abboud A."/>
            <person name="Al Khateeb M.A."/>
            <person name="Fakher M."/>
            <person name="Hamdan S."/>
            <person name="Ismael A."/>
            <person name="Muhammad S."/>
            <person name="Abdallah E."/>
            <person name="Sticht H."/>
            <person name="Wieczorek D."/>
            <person name="Reis A."/>
            <person name="Abou Jamra R."/>
        </authorList>
    </citation>
    <scope>VARIANT MCPH21 SER-8</scope>
</reference>
<proteinExistence type="evidence at protein level"/>